<comment type="function">
    <text evidence="1">Catalyzes the attachment of isoleucine to tRNA(Ile). As IleRS can inadvertently accommodate and process structurally similar amino acids such as valine, to avoid such errors it has two additional distinct tRNA(Ile)-dependent editing activities. One activity is designated as 'pretransfer' editing and involves the hydrolysis of activated Val-AMP. The other activity is designated 'posttransfer' editing and involves deacylation of mischarged Val-tRNA(Ile).</text>
</comment>
<comment type="catalytic activity">
    <reaction evidence="1">
        <text>tRNA(Ile) + L-isoleucine + ATP = L-isoleucyl-tRNA(Ile) + AMP + diphosphate</text>
        <dbReference type="Rhea" id="RHEA:11060"/>
        <dbReference type="Rhea" id="RHEA-COMP:9666"/>
        <dbReference type="Rhea" id="RHEA-COMP:9695"/>
        <dbReference type="ChEBI" id="CHEBI:30616"/>
        <dbReference type="ChEBI" id="CHEBI:33019"/>
        <dbReference type="ChEBI" id="CHEBI:58045"/>
        <dbReference type="ChEBI" id="CHEBI:78442"/>
        <dbReference type="ChEBI" id="CHEBI:78528"/>
        <dbReference type="ChEBI" id="CHEBI:456215"/>
        <dbReference type="EC" id="6.1.1.5"/>
    </reaction>
</comment>
<comment type="cofactor">
    <cofactor evidence="1">
        <name>Zn(2+)</name>
        <dbReference type="ChEBI" id="CHEBI:29105"/>
    </cofactor>
    <text evidence="1">Binds 1 zinc ion per subunit.</text>
</comment>
<comment type="subunit">
    <text evidence="1">Monomer.</text>
</comment>
<comment type="subcellular location">
    <subcellularLocation>
        <location evidence="1">Cytoplasm</location>
    </subcellularLocation>
</comment>
<comment type="domain">
    <text evidence="1">IleRS has two distinct active sites: one for aminoacylation and one for editing. The misactivated valine is translocated from the active site to the editing site, which sterically excludes the correctly activated isoleucine. The single editing site contains two valyl binding pockets, one specific for each substrate (Val-AMP or Val-tRNA(Ile)).</text>
</comment>
<comment type="similarity">
    <text evidence="1">Belongs to the class-I aminoacyl-tRNA synthetase family. IleS type 1 subfamily.</text>
</comment>
<dbReference type="EC" id="6.1.1.5" evidence="1"/>
<dbReference type="EMBL" id="AM920689">
    <property type="protein sequence ID" value="CAP52548.1"/>
    <property type="molecule type" value="Genomic_DNA"/>
</dbReference>
<dbReference type="SMR" id="B0RY28"/>
<dbReference type="KEGG" id="xca:xcc-b100_3183"/>
<dbReference type="HOGENOM" id="CLU_001493_7_0_6"/>
<dbReference type="Proteomes" id="UP000001188">
    <property type="component" value="Chromosome"/>
</dbReference>
<dbReference type="GO" id="GO:0005829">
    <property type="term" value="C:cytosol"/>
    <property type="evidence" value="ECO:0007669"/>
    <property type="project" value="TreeGrafter"/>
</dbReference>
<dbReference type="GO" id="GO:0002161">
    <property type="term" value="F:aminoacyl-tRNA deacylase activity"/>
    <property type="evidence" value="ECO:0007669"/>
    <property type="project" value="InterPro"/>
</dbReference>
<dbReference type="GO" id="GO:0005524">
    <property type="term" value="F:ATP binding"/>
    <property type="evidence" value="ECO:0007669"/>
    <property type="project" value="UniProtKB-UniRule"/>
</dbReference>
<dbReference type="GO" id="GO:0004822">
    <property type="term" value="F:isoleucine-tRNA ligase activity"/>
    <property type="evidence" value="ECO:0007669"/>
    <property type="project" value="UniProtKB-UniRule"/>
</dbReference>
<dbReference type="GO" id="GO:0000049">
    <property type="term" value="F:tRNA binding"/>
    <property type="evidence" value="ECO:0007669"/>
    <property type="project" value="InterPro"/>
</dbReference>
<dbReference type="GO" id="GO:0008270">
    <property type="term" value="F:zinc ion binding"/>
    <property type="evidence" value="ECO:0007669"/>
    <property type="project" value="UniProtKB-UniRule"/>
</dbReference>
<dbReference type="GO" id="GO:0006428">
    <property type="term" value="P:isoleucyl-tRNA aminoacylation"/>
    <property type="evidence" value="ECO:0007669"/>
    <property type="project" value="UniProtKB-UniRule"/>
</dbReference>
<dbReference type="CDD" id="cd07960">
    <property type="entry name" value="Anticodon_Ia_Ile_BEm"/>
    <property type="match status" value="1"/>
</dbReference>
<dbReference type="FunFam" id="1.10.730.20:FF:000001">
    <property type="entry name" value="Isoleucine--tRNA ligase"/>
    <property type="match status" value="1"/>
</dbReference>
<dbReference type="FunFam" id="3.40.50.620:FF:000042">
    <property type="entry name" value="Isoleucine--tRNA ligase"/>
    <property type="match status" value="1"/>
</dbReference>
<dbReference type="FunFam" id="3.40.50.620:FF:000048">
    <property type="entry name" value="Isoleucine--tRNA ligase"/>
    <property type="match status" value="1"/>
</dbReference>
<dbReference type="FunFam" id="3.90.740.10:FF:000022">
    <property type="entry name" value="Isoleucine--tRNA ligase"/>
    <property type="match status" value="1"/>
</dbReference>
<dbReference type="Gene3D" id="1.10.730.20">
    <property type="match status" value="1"/>
</dbReference>
<dbReference type="Gene3D" id="3.40.50.620">
    <property type="entry name" value="HUPs"/>
    <property type="match status" value="2"/>
</dbReference>
<dbReference type="Gene3D" id="1.10.10.830">
    <property type="entry name" value="Ile-tRNA synthetase CP2 domain-like"/>
    <property type="match status" value="1"/>
</dbReference>
<dbReference type="Gene3D" id="3.90.740.10">
    <property type="entry name" value="Valyl/Leucyl/Isoleucyl-tRNA synthetase, editing domain"/>
    <property type="match status" value="1"/>
</dbReference>
<dbReference type="HAMAP" id="MF_02002">
    <property type="entry name" value="Ile_tRNA_synth_type1"/>
    <property type="match status" value="1"/>
</dbReference>
<dbReference type="InterPro" id="IPR001412">
    <property type="entry name" value="aa-tRNA-synth_I_CS"/>
</dbReference>
<dbReference type="InterPro" id="IPR002300">
    <property type="entry name" value="aa-tRNA-synth_Ia"/>
</dbReference>
<dbReference type="InterPro" id="IPR033708">
    <property type="entry name" value="Anticodon_Ile_BEm"/>
</dbReference>
<dbReference type="InterPro" id="IPR002301">
    <property type="entry name" value="Ile-tRNA-ligase"/>
</dbReference>
<dbReference type="InterPro" id="IPR023585">
    <property type="entry name" value="Ile-tRNA-ligase_type1"/>
</dbReference>
<dbReference type="InterPro" id="IPR050081">
    <property type="entry name" value="Ile-tRNA_ligase"/>
</dbReference>
<dbReference type="InterPro" id="IPR013155">
    <property type="entry name" value="M/V/L/I-tRNA-synth_anticd-bd"/>
</dbReference>
<dbReference type="InterPro" id="IPR014729">
    <property type="entry name" value="Rossmann-like_a/b/a_fold"/>
</dbReference>
<dbReference type="InterPro" id="IPR009080">
    <property type="entry name" value="tRNAsynth_Ia_anticodon-bd"/>
</dbReference>
<dbReference type="InterPro" id="IPR009008">
    <property type="entry name" value="Val/Leu/Ile-tRNA-synth_edit"/>
</dbReference>
<dbReference type="InterPro" id="IPR010663">
    <property type="entry name" value="Znf_FPG/IleRS"/>
</dbReference>
<dbReference type="NCBIfam" id="TIGR00392">
    <property type="entry name" value="ileS"/>
    <property type="match status" value="1"/>
</dbReference>
<dbReference type="PANTHER" id="PTHR42765:SF1">
    <property type="entry name" value="ISOLEUCINE--TRNA LIGASE, MITOCHONDRIAL"/>
    <property type="match status" value="1"/>
</dbReference>
<dbReference type="PANTHER" id="PTHR42765">
    <property type="entry name" value="SOLEUCYL-TRNA SYNTHETASE"/>
    <property type="match status" value="1"/>
</dbReference>
<dbReference type="Pfam" id="PF08264">
    <property type="entry name" value="Anticodon_1"/>
    <property type="match status" value="1"/>
</dbReference>
<dbReference type="Pfam" id="PF00133">
    <property type="entry name" value="tRNA-synt_1"/>
    <property type="match status" value="1"/>
</dbReference>
<dbReference type="Pfam" id="PF06827">
    <property type="entry name" value="zf-FPG_IleRS"/>
    <property type="match status" value="1"/>
</dbReference>
<dbReference type="PRINTS" id="PR00984">
    <property type="entry name" value="TRNASYNTHILE"/>
</dbReference>
<dbReference type="SUPFAM" id="SSF47323">
    <property type="entry name" value="Anticodon-binding domain of a subclass of class I aminoacyl-tRNA synthetases"/>
    <property type="match status" value="1"/>
</dbReference>
<dbReference type="SUPFAM" id="SSF52374">
    <property type="entry name" value="Nucleotidylyl transferase"/>
    <property type="match status" value="1"/>
</dbReference>
<dbReference type="SUPFAM" id="SSF50677">
    <property type="entry name" value="ValRS/IleRS/LeuRS editing domain"/>
    <property type="match status" value="1"/>
</dbReference>
<dbReference type="PROSITE" id="PS00178">
    <property type="entry name" value="AA_TRNA_LIGASE_I"/>
    <property type="match status" value="1"/>
</dbReference>
<reference key="1">
    <citation type="journal article" date="2008" name="J. Biotechnol.">
        <title>The genome of Xanthomonas campestris pv. campestris B100 and its use for the reconstruction of metabolic pathways involved in xanthan biosynthesis.</title>
        <authorList>
            <person name="Vorhoelter F.-J."/>
            <person name="Schneiker S."/>
            <person name="Goesmann A."/>
            <person name="Krause L."/>
            <person name="Bekel T."/>
            <person name="Kaiser O."/>
            <person name="Linke B."/>
            <person name="Patschkowski T."/>
            <person name="Rueckert C."/>
            <person name="Schmid J."/>
            <person name="Sidhu V.K."/>
            <person name="Sieber V."/>
            <person name="Tauch A."/>
            <person name="Watt S.A."/>
            <person name="Weisshaar B."/>
            <person name="Becker A."/>
            <person name="Niehaus K."/>
            <person name="Puehler A."/>
        </authorList>
    </citation>
    <scope>NUCLEOTIDE SEQUENCE [LARGE SCALE GENOMIC DNA]</scope>
    <source>
        <strain>B100</strain>
    </source>
</reference>
<organism>
    <name type="scientific">Xanthomonas campestris pv. campestris (strain B100)</name>
    <dbReference type="NCBI Taxonomy" id="509169"/>
    <lineage>
        <taxon>Bacteria</taxon>
        <taxon>Pseudomonadati</taxon>
        <taxon>Pseudomonadota</taxon>
        <taxon>Gammaproteobacteria</taxon>
        <taxon>Lysobacterales</taxon>
        <taxon>Lysobacteraceae</taxon>
        <taxon>Xanthomonas</taxon>
    </lineage>
</organism>
<protein>
    <recommendedName>
        <fullName evidence="1">Isoleucine--tRNA ligase</fullName>
        <ecNumber evidence="1">6.1.1.5</ecNumber>
    </recommendedName>
    <alternativeName>
        <fullName evidence="1">Isoleucyl-tRNA synthetase</fullName>
        <shortName evidence="1">IleRS</shortName>
    </alternativeName>
</protein>
<name>SYI_XANCB</name>
<sequence>MTQDYKATLHLPATDFPMRGDLPKREPAMLERWEREGLYAQVRANAAGRPLFVLHDGPPYANGQIHLGHAVNKILKDIIVKSKYLAGFDAPYIPGWDCHGLPIEIAIEKKFGKVGVKLDAAQFRQKCREYATEQIDLQRRDFKRLGVIGDWDNPYKTLDFRFEANEIRALAKVIDNGHLTRGVKPVHWCFDCGSALAEAEIEYADKVSPTVDIAYPARDPAAVAAAFGVTLSAGTQVAVPIWTTTPWTLPASLAVSLGAELDYVLVEGAADHGQPRWLVIAEALAGKALARYGVDAVVVHGHAKGAALDQLLLAHPFYAERDIPLILGDHVSDDDGTGAVHTAPGHGQEDYQVSKQYGLLERYSAAQINPIDGRGVYLPSTPPLGDTVLAGLHIWKANDVIIDALRDTGALLAASKMEHSYPHCWRHKTPIAFRATPQWFISMEQANLRADALKAIETVHWYPSWGQARIAGMIDGRPDWTISRQRTWGVPIALFVHRETGEPHPRSTELMRQVAERVEQGGVDVWYTLDAAELLGDEAGDYDKITDILDVWFDSGVTHETVLVDRGLPKPADLYLEGSDQHRGWFQSSLLTGVAMDKVAPYKQCLTHGFTVDEHGRKMSKSLGNGIEPQEIMRTLGADILRLWIASADYSNEMSLSQEILKRNADAYRRLRNTARFLLGNLHGFDPLQHLVALDDMVLLDRWIVHRAHELQEKITAAYARYDFAEIVQGLLNFCSVDLGSLYLDVTKDRLYTMAEDARGRRSAQSAMYHVAEAFVRWIAPVLSFTAEELWAYLPGEHSGNVLFATWYDGLAPMPADAALTSADVDKLLALREQVAKVLEPMRANGAIGAALEAEITVAADAQTAARWQPLSDELRFLFISGDVTVTAASTDDIFVSAQPTTKAKCVRCWHHQASVGSDPRHPELCSRCVSNIEGPGEERRWF</sequence>
<accession>B0RY28</accession>
<keyword id="KW-0030">Aminoacyl-tRNA synthetase</keyword>
<keyword id="KW-0067">ATP-binding</keyword>
<keyword id="KW-0963">Cytoplasm</keyword>
<keyword id="KW-0436">Ligase</keyword>
<keyword id="KW-0479">Metal-binding</keyword>
<keyword id="KW-0547">Nucleotide-binding</keyword>
<keyword id="KW-0648">Protein biosynthesis</keyword>
<keyword id="KW-0862">Zinc</keyword>
<gene>
    <name evidence="1" type="primary">ileS</name>
    <name type="ordered locus">xcc-b100_3183</name>
</gene>
<proteinExistence type="inferred from homology"/>
<evidence type="ECO:0000255" key="1">
    <source>
        <dbReference type="HAMAP-Rule" id="MF_02002"/>
    </source>
</evidence>
<feature type="chain" id="PRO_1000189216" description="Isoleucine--tRNA ligase">
    <location>
        <begin position="1"/>
        <end position="943"/>
    </location>
</feature>
<feature type="short sequence motif" description="'HIGH' region">
    <location>
        <begin position="59"/>
        <end position="69"/>
    </location>
</feature>
<feature type="short sequence motif" description="'KMSKS' region">
    <location>
        <begin position="618"/>
        <end position="622"/>
    </location>
</feature>
<feature type="binding site" evidence="1">
    <location>
        <position position="577"/>
    </location>
    <ligand>
        <name>L-isoleucyl-5'-AMP</name>
        <dbReference type="ChEBI" id="CHEBI:178002"/>
    </ligand>
</feature>
<feature type="binding site" evidence="1">
    <location>
        <position position="621"/>
    </location>
    <ligand>
        <name>ATP</name>
        <dbReference type="ChEBI" id="CHEBI:30616"/>
    </ligand>
</feature>
<feature type="binding site" evidence="1">
    <location>
        <position position="906"/>
    </location>
    <ligand>
        <name>Zn(2+)</name>
        <dbReference type="ChEBI" id="CHEBI:29105"/>
    </ligand>
</feature>
<feature type="binding site" evidence="1">
    <location>
        <position position="909"/>
    </location>
    <ligand>
        <name>Zn(2+)</name>
        <dbReference type="ChEBI" id="CHEBI:29105"/>
    </ligand>
</feature>
<feature type="binding site" evidence="1">
    <location>
        <position position="926"/>
    </location>
    <ligand>
        <name>Zn(2+)</name>
        <dbReference type="ChEBI" id="CHEBI:29105"/>
    </ligand>
</feature>
<feature type="binding site" evidence="1">
    <location>
        <position position="929"/>
    </location>
    <ligand>
        <name>Zn(2+)</name>
        <dbReference type="ChEBI" id="CHEBI:29105"/>
    </ligand>
</feature>